<comment type="function">
    <text evidence="1">Located on the platform of the 30S subunit, it bridges several disparate RNA helices of the 16S rRNA. Forms part of the Shine-Dalgarno cleft in the 70S ribosome.</text>
</comment>
<comment type="subunit">
    <text evidence="1">Part of the 30S ribosomal subunit. Interacts with proteins S7 and S18. Binds to IF-3.</text>
</comment>
<comment type="similarity">
    <text evidence="1">Belongs to the universal ribosomal protein uS11 family.</text>
</comment>
<evidence type="ECO:0000255" key="1">
    <source>
        <dbReference type="HAMAP-Rule" id="MF_01310"/>
    </source>
</evidence>
<evidence type="ECO:0000305" key="2"/>
<feature type="chain" id="PRO_0000230404" description="Small ribosomal subunit protein uS11">
    <location>
        <begin position="1"/>
        <end position="130"/>
    </location>
</feature>
<accession>Q5FU06</accession>
<proteinExistence type="inferred from homology"/>
<reference key="1">
    <citation type="journal article" date="2005" name="Nat. Biotechnol.">
        <title>Complete genome sequence of the acetic acid bacterium Gluconobacter oxydans.</title>
        <authorList>
            <person name="Prust C."/>
            <person name="Hoffmeister M."/>
            <person name="Liesegang H."/>
            <person name="Wiezer A."/>
            <person name="Fricke W.F."/>
            <person name="Ehrenreich A."/>
            <person name="Gottschalk G."/>
            <person name="Deppenmeier U."/>
        </authorList>
    </citation>
    <scope>NUCLEOTIDE SEQUENCE [LARGE SCALE GENOMIC DNA]</scope>
    <source>
        <strain>621H</strain>
    </source>
</reference>
<sequence>MAKAAAPRIRKKERKNIISGVAHVLSTFNNTMITISDAQGNAIAWSSSGAQGFKGSRKSTPYAAQVAAEDAGRKAREHGMETLEIEVSGPGSGRESALRALQAVGFNITSIRDMTPVPHNGCRPRKRRRV</sequence>
<name>RS11_GLUOX</name>
<dbReference type="EMBL" id="CP000009">
    <property type="protein sequence ID" value="AAW60140.1"/>
    <property type="molecule type" value="Genomic_DNA"/>
</dbReference>
<dbReference type="RefSeq" id="WP_011251943.1">
    <property type="nucleotide sequence ID" value="NZ_LT900338.1"/>
</dbReference>
<dbReference type="SMR" id="Q5FU06"/>
<dbReference type="STRING" id="290633.GOX0357"/>
<dbReference type="GeneID" id="76195059"/>
<dbReference type="KEGG" id="gox:GOX0357"/>
<dbReference type="eggNOG" id="COG0100">
    <property type="taxonomic scope" value="Bacteria"/>
</dbReference>
<dbReference type="HOGENOM" id="CLU_072439_5_0_5"/>
<dbReference type="Proteomes" id="UP000006375">
    <property type="component" value="Chromosome"/>
</dbReference>
<dbReference type="GO" id="GO:1990904">
    <property type="term" value="C:ribonucleoprotein complex"/>
    <property type="evidence" value="ECO:0007669"/>
    <property type="project" value="UniProtKB-KW"/>
</dbReference>
<dbReference type="GO" id="GO:0005840">
    <property type="term" value="C:ribosome"/>
    <property type="evidence" value="ECO:0007669"/>
    <property type="project" value="UniProtKB-KW"/>
</dbReference>
<dbReference type="GO" id="GO:0019843">
    <property type="term" value="F:rRNA binding"/>
    <property type="evidence" value="ECO:0007669"/>
    <property type="project" value="UniProtKB-UniRule"/>
</dbReference>
<dbReference type="GO" id="GO:0003735">
    <property type="term" value="F:structural constituent of ribosome"/>
    <property type="evidence" value="ECO:0007669"/>
    <property type="project" value="InterPro"/>
</dbReference>
<dbReference type="GO" id="GO:0006412">
    <property type="term" value="P:translation"/>
    <property type="evidence" value="ECO:0007669"/>
    <property type="project" value="UniProtKB-UniRule"/>
</dbReference>
<dbReference type="FunFam" id="3.30.420.80:FF:000001">
    <property type="entry name" value="30S ribosomal protein S11"/>
    <property type="match status" value="1"/>
</dbReference>
<dbReference type="Gene3D" id="3.30.420.80">
    <property type="entry name" value="Ribosomal protein S11"/>
    <property type="match status" value="1"/>
</dbReference>
<dbReference type="HAMAP" id="MF_01310">
    <property type="entry name" value="Ribosomal_uS11"/>
    <property type="match status" value="1"/>
</dbReference>
<dbReference type="InterPro" id="IPR001971">
    <property type="entry name" value="Ribosomal_uS11"/>
</dbReference>
<dbReference type="InterPro" id="IPR019981">
    <property type="entry name" value="Ribosomal_uS11_bac-type"/>
</dbReference>
<dbReference type="InterPro" id="IPR018102">
    <property type="entry name" value="Ribosomal_uS11_CS"/>
</dbReference>
<dbReference type="InterPro" id="IPR036967">
    <property type="entry name" value="Ribosomal_uS11_sf"/>
</dbReference>
<dbReference type="NCBIfam" id="NF003698">
    <property type="entry name" value="PRK05309.1"/>
    <property type="match status" value="1"/>
</dbReference>
<dbReference type="NCBIfam" id="TIGR03632">
    <property type="entry name" value="uS11_bact"/>
    <property type="match status" value="1"/>
</dbReference>
<dbReference type="PANTHER" id="PTHR11759">
    <property type="entry name" value="40S RIBOSOMAL PROTEIN S14/30S RIBOSOMAL PROTEIN S11"/>
    <property type="match status" value="1"/>
</dbReference>
<dbReference type="Pfam" id="PF00411">
    <property type="entry name" value="Ribosomal_S11"/>
    <property type="match status" value="1"/>
</dbReference>
<dbReference type="PIRSF" id="PIRSF002131">
    <property type="entry name" value="Ribosomal_S11"/>
    <property type="match status" value="1"/>
</dbReference>
<dbReference type="SUPFAM" id="SSF53137">
    <property type="entry name" value="Translational machinery components"/>
    <property type="match status" value="1"/>
</dbReference>
<dbReference type="PROSITE" id="PS00054">
    <property type="entry name" value="RIBOSOMAL_S11"/>
    <property type="match status" value="1"/>
</dbReference>
<keyword id="KW-1185">Reference proteome</keyword>
<keyword id="KW-0687">Ribonucleoprotein</keyword>
<keyword id="KW-0689">Ribosomal protein</keyword>
<keyword id="KW-0694">RNA-binding</keyword>
<keyword id="KW-0699">rRNA-binding</keyword>
<protein>
    <recommendedName>
        <fullName evidence="1">Small ribosomal subunit protein uS11</fullName>
    </recommendedName>
    <alternativeName>
        <fullName evidence="2">30S ribosomal protein S11</fullName>
    </alternativeName>
</protein>
<organism>
    <name type="scientific">Gluconobacter oxydans (strain 621H)</name>
    <name type="common">Gluconobacter suboxydans</name>
    <dbReference type="NCBI Taxonomy" id="290633"/>
    <lineage>
        <taxon>Bacteria</taxon>
        <taxon>Pseudomonadati</taxon>
        <taxon>Pseudomonadota</taxon>
        <taxon>Alphaproteobacteria</taxon>
        <taxon>Acetobacterales</taxon>
        <taxon>Acetobacteraceae</taxon>
        <taxon>Gluconobacter</taxon>
    </lineage>
</organism>
<gene>
    <name evidence="1" type="primary">rpsK</name>
    <name type="ordered locus">GOX0357</name>
</gene>